<comment type="function">
    <text evidence="2">Toxin that seems to act by forming pores in the membrane of the cell. Has a hemolytic and a leucotoxic activity. Promotes host AMFR-mediated inflammation by mediating 'Lys-27'-linked ubiquitination of TAB3, TAK1-TAB3 complex formation and phosphorylation of TAK1/MAP3K7. In turn, activates host NF-kappa-B signaling pathway.</text>
</comment>
<comment type="subunit">
    <text evidence="1 2">Toxicity requires sequential binding and synergistic association of a class S and a class F component which form heterooligomeric complexes. HlgB (class F) associates with either hlgA thus forming an AB toxin or with hlgC thus forming a CB toxin (By similarity). Interacts with host AMFR (By similarity).</text>
</comment>
<comment type="similarity">
    <text evidence="4">Belongs to the aerolysin family.</text>
</comment>
<protein>
    <recommendedName>
        <fullName>Gamma-hemolysin component B</fullName>
    </recommendedName>
    <alternativeName>
        <fullName>H-gamma-1</fullName>
    </alternativeName>
    <alternativeName>
        <fullName>H-gamma-I</fullName>
    </alternativeName>
</protein>
<reference key="1">
    <citation type="journal article" date="2002" name="Lancet">
        <title>Genome and virulence determinants of high virulence community-acquired MRSA.</title>
        <authorList>
            <person name="Baba T."/>
            <person name="Takeuchi F."/>
            <person name="Kuroda M."/>
            <person name="Yuzawa H."/>
            <person name="Aoki K."/>
            <person name="Oguchi A."/>
            <person name="Nagai Y."/>
            <person name="Iwama N."/>
            <person name="Asano K."/>
            <person name="Naimi T."/>
            <person name="Kuroda H."/>
            <person name="Cui L."/>
            <person name="Yamamoto K."/>
            <person name="Hiramatsu K."/>
        </authorList>
    </citation>
    <scope>NUCLEOTIDE SEQUENCE [LARGE SCALE GENOMIC DNA]</scope>
    <source>
        <strain>MW2</strain>
    </source>
</reference>
<accession>P0A076</accession>
<accession>Q07226</accession>
<sequence length="325" mass="36711">MKMNKLVKSSVATSMALLLLSGTANAEGKITPVSVKKVDDKVTLYKTTATADSDKFKISQILTFNFIKDKSYDKDTLVLKATGNINSGFVKPNPNDYDFSKLYWGAKYNVSISSQSNDSVNVVDYAPKNQNEEFQVQNTLGYTFGGDISISNGLSGGLNGNTAFSETINYKQESYRTTLSRNTNYKNVGWGVEAHKIMNNGWGPYGRDSFHPTYGNELFLAGRQSSAYAGQNFIAQHQMPLLSRSNFNPEFLSVLSHRQDGAKKSKITVTYQREMDLYQIRWNGFYWAGANYKNFKTRTFKSTYEIDWENHKVKLLDTKETENNK</sequence>
<organism>
    <name type="scientific">Staphylococcus aureus (strain MW2)</name>
    <dbReference type="NCBI Taxonomy" id="196620"/>
    <lineage>
        <taxon>Bacteria</taxon>
        <taxon>Bacillati</taxon>
        <taxon>Bacillota</taxon>
        <taxon>Bacilli</taxon>
        <taxon>Bacillales</taxon>
        <taxon>Staphylococcaceae</taxon>
        <taxon>Staphylococcus</taxon>
    </lineage>
</organism>
<dbReference type="EMBL" id="BA000033">
    <property type="protein sequence ID" value="BAB96209.1"/>
    <property type="molecule type" value="Genomic_DNA"/>
</dbReference>
<dbReference type="RefSeq" id="WP_000783428.1">
    <property type="nucleotide sequence ID" value="NC_003923.1"/>
</dbReference>
<dbReference type="SMR" id="P0A076"/>
<dbReference type="DrugBank" id="DB03945">
    <property type="generic name" value="N,N,N-Trimethyl-2-(phosphonooxy)ethanaminium"/>
</dbReference>
<dbReference type="KEGG" id="sam:MW2344"/>
<dbReference type="HOGENOM" id="CLU_055394_0_1_9"/>
<dbReference type="GO" id="GO:0005576">
    <property type="term" value="C:extracellular region"/>
    <property type="evidence" value="ECO:0007669"/>
    <property type="project" value="InterPro"/>
</dbReference>
<dbReference type="GO" id="GO:0090729">
    <property type="term" value="F:toxin activity"/>
    <property type="evidence" value="ECO:0007669"/>
    <property type="project" value="UniProtKB-KW"/>
</dbReference>
<dbReference type="GO" id="GO:0051715">
    <property type="term" value="P:cytolysis in another organism"/>
    <property type="evidence" value="ECO:0007669"/>
    <property type="project" value="InterPro"/>
</dbReference>
<dbReference type="Gene3D" id="2.70.240.10">
    <property type="entry name" value="Leukocidin/porin MspA"/>
    <property type="match status" value="1"/>
</dbReference>
<dbReference type="InterPro" id="IPR003963">
    <property type="entry name" value="Bi-component_toxin_staph"/>
</dbReference>
<dbReference type="InterPro" id="IPR016183">
    <property type="entry name" value="Leukocidin/Hemolysin_toxin"/>
</dbReference>
<dbReference type="InterPro" id="IPR036435">
    <property type="entry name" value="Leukocidin/porin_MspA_sf"/>
</dbReference>
<dbReference type="NCBIfam" id="TIGR01002">
    <property type="entry name" value="hlyII"/>
    <property type="match status" value="1"/>
</dbReference>
<dbReference type="Pfam" id="PF07968">
    <property type="entry name" value="Leukocidin"/>
    <property type="match status" value="1"/>
</dbReference>
<dbReference type="PRINTS" id="PR01468">
    <property type="entry name" value="BICOMPNTOXIN"/>
</dbReference>
<dbReference type="SUPFAM" id="SSF56959">
    <property type="entry name" value="Leukocidin-like"/>
    <property type="match status" value="1"/>
</dbReference>
<feature type="signal peptide" evidence="3">
    <location>
        <begin position="1"/>
        <end position="25"/>
    </location>
</feature>
<feature type="chain" id="PRO_0000018425" description="Gamma-hemolysin component B">
    <location>
        <begin position="26"/>
        <end position="325"/>
    </location>
</feature>
<evidence type="ECO:0000250" key="1"/>
<evidence type="ECO:0000250" key="2">
    <source>
        <dbReference type="UniProtKB" id="Q2FVK1"/>
    </source>
</evidence>
<evidence type="ECO:0000255" key="3"/>
<evidence type="ECO:0000305" key="4"/>
<name>HLGB_STAAW</name>
<gene>
    <name type="primary">hlgB</name>
    <name type="ordered locus">MW2344</name>
</gene>
<proteinExistence type="inferred from homology"/>
<keyword id="KW-0204">Cytolysis</keyword>
<keyword id="KW-0354">Hemolysis</keyword>
<keyword id="KW-0732">Signal</keyword>
<keyword id="KW-0800">Toxin</keyword>
<keyword id="KW-0843">Virulence</keyword>